<sequence length="57" mass="7102">MKRSRTEVGRWRMQRQASRRKSRWLEGQSRRNMRIHSIRKCILNKQRNSLLFAIYNI</sequence>
<organism>
    <name type="scientific">Escherichia coli (strain UTI89 / UPEC)</name>
    <dbReference type="NCBI Taxonomy" id="364106"/>
    <lineage>
        <taxon>Bacteria</taxon>
        <taxon>Pseudomonadati</taxon>
        <taxon>Pseudomonadota</taxon>
        <taxon>Gammaproteobacteria</taxon>
        <taxon>Enterobacterales</taxon>
        <taxon>Enterobacteriaceae</taxon>
        <taxon>Escherichia</taxon>
    </lineage>
</organism>
<reference key="1">
    <citation type="journal article" date="2006" name="Proc. Natl. Acad. Sci. U.S.A.">
        <title>Identification of genes subject to positive selection in uropathogenic strains of Escherichia coli: a comparative genomics approach.</title>
        <authorList>
            <person name="Chen S.L."/>
            <person name="Hung C.-S."/>
            <person name="Xu J."/>
            <person name="Reigstad C.S."/>
            <person name="Magrini V."/>
            <person name="Sabo A."/>
            <person name="Blasiar D."/>
            <person name="Bieri T."/>
            <person name="Meyer R.R."/>
            <person name="Ozersky P."/>
            <person name="Armstrong J.R."/>
            <person name="Fulton R.S."/>
            <person name="Latreille J.P."/>
            <person name="Spieth J."/>
            <person name="Hooton T.M."/>
            <person name="Mardis E.R."/>
            <person name="Hultgren S.J."/>
            <person name="Gordon J.I."/>
        </authorList>
    </citation>
    <scope>NUCLEOTIDE SEQUENCE [LARGE SCALE GENOMIC DNA]</scope>
    <source>
        <strain>UTI89 / UPEC</strain>
    </source>
</reference>
<evidence type="ECO:0000256" key="1">
    <source>
        <dbReference type="SAM" id="MobiDB-lite"/>
    </source>
</evidence>
<evidence type="ECO:0000305" key="2"/>
<accession>Q1RCI6</accession>
<dbReference type="EMBL" id="CP000243">
    <property type="protein sequence ID" value="ABE06928.1"/>
    <property type="status" value="ALT_INIT"/>
    <property type="molecule type" value="Genomic_DNA"/>
</dbReference>
<dbReference type="RefSeq" id="WP_001309467.1">
    <property type="nucleotide sequence ID" value="NZ_CP064825.1"/>
</dbReference>
<dbReference type="KEGG" id="eci:UTI89_C1448"/>
<dbReference type="HOGENOM" id="CLU_2381553_0_0_6"/>
<dbReference type="Proteomes" id="UP000001952">
    <property type="component" value="Chromosome"/>
</dbReference>
<dbReference type="InterPro" id="IPR049586">
    <property type="entry name" value="YciY"/>
</dbReference>
<dbReference type="NCBIfam" id="NF033701">
    <property type="entry name" value="yciY_fam"/>
    <property type="match status" value="1"/>
</dbReference>
<name>YCIY_ECOUT</name>
<comment type="similarity">
    <text evidence="2">Belongs to the YciY family.</text>
</comment>
<comment type="sequence caution" evidence="2">
    <conflict type="erroneous initiation">
        <sequence resource="EMBL-CDS" id="ABE06928"/>
    </conflict>
</comment>
<protein>
    <recommendedName>
        <fullName>Uncharacterized protein YciY</fullName>
    </recommendedName>
</protein>
<gene>
    <name type="primary">yciY</name>
    <name type="ordered locus">UTI89_C1448</name>
</gene>
<proteinExistence type="inferred from homology"/>
<feature type="chain" id="PRO_0000311784" description="Uncharacterized protein YciY">
    <location>
        <begin position="1"/>
        <end position="57"/>
    </location>
</feature>
<feature type="region of interest" description="Disordered" evidence="1">
    <location>
        <begin position="1"/>
        <end position="25"/>
    </location>
</feature>
<feature type="compositionally biased region" description="Basic and acidic residues" evidence="1">
    <location>
        <begin position="1"/>
        <end position="10"/>
    </location>
</feature>